<proteinExistence type="inferred from homology"/>
<accession>B3R0P5</accession>
<sequence length="65" mass="7561">MIKKKSHSGLKKRIKISKNKKILRGHAYKNHLAASKTTKQNRQLRGLTMVHKSDVKRIKIMLNNL</sequence>
<keyword id="KW-1185">Reference proteome</keyword>
<keyword id="KW-0687">Ribonucleoprotein</keyword>
<keyword id="KW-0689">Ribosomal protein</keyword>
<comment type="similarity">
    <text evidence="1">Belongs to the bacterial ribosomal protein bL35 family.</text>
</comment>
<evidence type="ECO:0000255" key="1">
    <source>
        <dbReference type="HAMAP-Rule" id="MF_00514"/>
    </source>
</evidence>
<evidence type="ECO:0000305" key="2"/>
<feature type="chain" id="PRO_1000146154" description="Large ribosomal subunit protein bL35">
    <location>
        <begin position="1"/>
        <end position="65"/>
    </location>
</feature>
<organism>
    <name type="scientific">Phytoplasma mali (strain AT)</name>
    <dbReference type="NCBI Taxonomy" id="482235"/>
    <lineage>
        <taxon>Bacteria</taxon>
        <taxon>Bacillati</taxon>
        <taxon>Mycoplasmatota</taxon>
        <taxon>Mollicutes</taxon>
        <taxon>Acholeplasmatales</taxon>
        <taxon>Acholeplasmataceae</taxon>
        <taxon>Candidatus Phytoplasma</taxon>
        <taxon>16SrX (Apple proliferation group)</taxon>
    </lineage>
</organism>
<protein>
    <recommendedName>
        <fullName evidence="1">Large ribosomal subunit protein bL35</fullName>
    </recommendedName>
    <alternativeName>
        <fullName evidence="2">50S ribosomal protein L35</fullName>
    </alternativeName>
</protein>
<reference key="1">
    <citation type="journal article" date="2008" name="BMC Genomics">
        <title>The linear chromosome of the plant-pathogenic mycoplasma 'Candidatus Phytoplasma mali'.</title>
        <authorList>
            <person name="Kube M."/>
            <person name="Schneider B."/>
            <person name="Kuhl H."/>
            <person name="Dandekar T."/>
            <person name="Heitmann K."/>
            <person name="Migdoll A.M."/>
            <person name="Reinhardt R."/>
            <person name="Seemueller E."/>
        </authorList>
    </citation>
    <scope>NUCLEOTIDE SEQUENCE [LARGE SCALE GENOMIC DNA]</scope>
    <source>
        <strain>AT</strain>
    </source>
</reference>
<name>RL35_PHYMT</name>
<gene>
    <name evidence="1" type="primary">rpmI</name>
    <name type="ordered locus">ATP_00442</name>
</gene>
<dbReference type="EMBL" id="CU469464">
    <property type="protein sequence ID" value="CAP18629.1"/>
    <property type="molecule type" value="Genomic_DNA"/>
</dbReference>
<dbReference type="SMR" id="B3R0P5"/>
<dbReference type="STRING" id="37692.ATP_00442"/>
<dbReference type="KEGG" id="pml:ATP_00442"/>
<dbReference type="eggNOG" id="COG0291">
    <property type="taxonomic scope" value="Bacteria"/>
</dbReference>
<dbReference type="HOGENOM" id="CLU_169643_3_1_14"/>
<dbReference type="Proteomes" id="UP000002020">
    <property type="component" value="Chromosome"/>
</dbReference>
<dbReference type="GO" id="GO:0022625">
    <property type="term" value="C:cytosolic large ribosomal subunit"/>
    <property type="evidence" value="ECO:0007669"/>
    <property type="project" value="TreeGrafter"/>
</dbReference>
<dbReference type="GO" id="GO:0003735">
    <property type="term" value="F:structural constituent of ribosome"/>
    <property type="evidence" value="ECO:0007669"/>
    <property type="project" value="InterPro"/>
</dbReference>
<dbReference type="GO" id="GO:0006412">
    <property type="term" value="P:translation"/>
    <property type="evidence" value="ECO:0007669"/>
    <property type="project" value="UniProtKB-UniRule"/>
</dbReference>
<dbReference type="FunFam" id="4.10.410.60:FF:000001">
    <property type="entry name" value="50S ribosomal protein L35"/>
    <property type="match status" value="1"/>
</dbReference>
<dbReference type="Gene3D" id="4.10.410.60">
    <property type="match status" value="1"/>
</dbReference>
<dbReference type="HAMAP" id="MF_00514">
    <property type="entry name" value="Ribosomal_bL35"/>
    <property type="match status" value="1"/>
</dbReference>
<dbReference type="InterPro" id="IPR001706">
    <property type="entry name" value="Ribosomal_bL35"/>
</dbReference>
<dbReference type="InterPro" id="IPR021137">
    <property type="entry name" value="Ribosomal_bL35-like"/>
</dbReference>
<dbReference type="InterPro" id="IPR018265">
    <property type="entry name" value="Ribosomal_bL35_CS"/>
</dbReference>
<dbReference type="InterPro" id="IPR037229">
    <property type="entry name" value="Ribosomal_bL35_sf"/>
</dbReference>
<dbReference type="NCBIfam" id="TIGR00001">
    <property type="entry name" value="rpmI_bact"/>
    <property type="match status" value="1"/>
</dbReference>
<dbReference type="PANTHER" id="PTHR33343">
    <property type="entry name" value="54S RIBOSOMAL PROTEIN BL35M"/>
    <property type="match status" value="1"/>
</dbReference>
<dbReference type="PANTHER" id="PTHR33343:SF1">
    <property type="entry name" value="LARGE RIBOSOMAL SUBUNIT PROTEIN BL35M"/>
    <property type="match status" value="1"/>
</dbReference>
<dbReference type="Pfam" id="PF01632">
    <property type="entry name" value="Ribosomal_L35p"/>
    <property type="match status" value="1"/>
</dbReference>
<dbReference type="PRINTS" id="PR00064">
    <property type="entry name" value="RIBOSOMALL35"/>
</dbReference>
<dbReference type="SUPFAM" id="SSF143034">
    <property type="entry name" value="L35p-like"/>
    <property type="match status" value="1"/>
</dbReference>
<dbReference type="PROSITE" id="PS00936">
    <property type="entry name" value="RIBOSOMAL_L35"/>
    <property type="match status" value="1"/>
</dbReference>